<name>RL20_SULDN</name>
<proteinExistence type="inferred from homology"/>
<protein>
    <recommendedName>
        <fullName evidence="1">Large ribosomal subunit protein bL20</fullName>
    </recommendedName>
    <alternativeName>
        <fullName evidence="2">50S ribosomal protein L20</fullName>
    </alternativeName>
</protein>
<reference key="1">
    <citation type="journal article" date="2008" name="Appl. Environ. Microbiol.">
        <title>Genome of the epsilonproteobacterial chemolithoautotroph Sulfurimonas denitrificans.</title>
        <authorList>
            <person name="Sievert S.M."/>
            <person name="Scott K.M."/>
            <person name="Klotz M.G."/>
            <person name="Chain P.S.G."/>
            <person name="Hauser L.J."/>
            <person name="Hemp J."/>
            <person name="Huegler M."/>
            <person name="Land M."/>
            <person name="Lapidus A."/>
            <person name="Larimer F.W."/>
            <person name="Lucas S."/>
            <person name="Malfatti S.A."/>
            <person name="Meyer F."/>
            <person name="Paulsen I.T."/>
            <person name="Ren Q."/>
            <person name="Simon J."/>
            <person name="Bailey K."/>
            <person name="Diaz E."/>
            <person name="Fitzpatrick K.A."/>
            <person name="Glover B."/>
            <person name="Gwatney N."/>
            <person name="Korajkic A."/>
            <person name="Long A."/>
            <person name="Mobberley J.M."/>
            <person name="Pantry S.N."/>
            <person name="Pazder G."/>
            <person name="Peterson S."/>
            <person name="Quintanilla J.D."/>
            <person name="Sprinkle R."/>
            <person name="Stephens J."/>
            <person name="Thomas P."/>
            <person name="Vaughn R."/>
            <person name="Weber M.J."/>
            <person name="Wooten L.L."/>
        </authorList>
    </citation>
    <scope>NUCLEOTIDE SEQUENCE [LARGE SCALE GENOMIC DNA]</scope>
    <source>
        <strain>ATCC 33889 / DSM 1251</strain>
    </source>
</reference>
<comment type="function">
    <text evidence="1">Binds directly to 23S ribosomal RNA and is necessary for the in vitro assembly process of the 50S ribosomal subunit. It is not involved in the protein synthesizing functions of that subunit.</text>
</comment>
<comment type="similarity">
    <text evidence="1">Belongs to the bacterial ribosomal protein bL20 family.</text>
</comment>
<evidence type="ECO:0000255" key="1">
    <source>
        <dbReference type="HAMAP-Rule" id="MF_00382"/>
    </source>
</evidence>
<evidence type="ECO:0000305" key="2"/>
<keyword id="KW-1185">Reference proteome</keyword>
<keyword id="KW-0687">Ribonucleoprotein</keyword>
<keyword id="KW-0689">Ribosomal protein</keyword>
<keyword id="KW-0694">RNA-binding</keyword>
<keyword id="KW-0699">rRNA-binding</keyword>
<feature type="chain" id="PRO_0000243755" description="Large ribosomal subunit protein bL20">
    <location>
        <begin position="1"/>
        <end position="118"/>
    </location>
</feature>
<organism>
    <name type="scientific">Sulfurimonas denitrificans (strain ATCC 33889 / DSM 1251)</name>
    <name type="common">Thiomicrospira denitrificans (strain ATCC 33889 / DSM 1251)</name>
    <dbReference type="NCBI Taxonomy" id="326298"/>
    <lineage>
        <taxon>Bacteria</taxon>
        <taxon>Pseudomonadati</taxon>
        <taxon>Campylobacterota</taxon>
        <taxon>Epsilonproteobacteria</taxon>
        <taxon>Campylobacterales</taxon>
        <taxon>Sulfurimonadaceae</taxon>
        <taxon>Sulfurimonas</taxon>
    </lineage>
</organism>
<sequence length="118" mass="13724">MPRVKTGVVRRRRHKKILKLAKGFYSGRRKHYRKAKEQLERSMYYSFRDRKQKKRDFRKLWIIRINAACRLNGMNYSTFINGLSKAGIELDRKILADMAMNDAAAFSAVAASAKAALK</sequence>
<accession>Q30U43</accession>
<gene>
    <name evidence="1" type="primary">rplT</name>
    <name type="ordered locus">Suden_0207</name>
</gene>
<dbReference type="EMBL" id="CP000153">
    <property type="protein sequence ID" value="ABB43488.1"/>
    <property type="molecule type" value="Genomic_DNA"/>
</dbReference>
<dbReference type="RefSeq" id="WP_011371843.1">
    <property type="nucleotide sequence ID" value="NC_007575.1"/>
</dbReference>
<dbReference type="SMR" id="Q30U43"/>
<dbReference type="STRING" id="326298.Suden_0207"/>
<dbReference type="KEGG" id="tdn:Suden_0207"/>
<dbReference type="eggNOG" id="COG0292">
    <property type="taxonomic scope" value="Bacteria"/>
</dbReference>
<dbReference type="HOGENOM" id="CLU_123265_0_1_7"/>
<dbReference type="OrthoDB" id="9808966at2"/>
<dbReference type="Proteomes" id="UP000002714">
    <property type="component" value="Chromosome"/>
</dbReference>
<dbReference type="GO" id="GO:1990904">
    <property type="term" value="C:ribonucleoprotein complex"/>
    <property type="evidence" value="ECO:0007669"/>
    <property type="project" value="UniProtKB-KW"/>
</dbReference>
<dbReference type="GO" id="GO:0005840">
    <property type="term" value="C:ribosome"/>
    <property type="evidence" value="ECO:0007669"/>
    <property type="project" value="UniProtKB-KW"/>
</dbReference>
<dbReference type="GO" id="GO:0019843">
    <property type="term" value="F:rRNA binding"/>
    <property type="evidence" value="ECO:0007669"/>
    <property type="project" value="UniProtKB-UniRule"/>
</dbReference>
<dbReference type="GO" id="GO:0003735">
    <property type="term" value="F:structural constituent of ribosome"/>
    <property type="evidence" value="ECO:0007669"/>
    <property type="project" value="InterPro"/>
</dbReference>
<dbReference type="GO" id="GO:0000027">
    <property type="term" value="P:ribosomal large subunit assembly"/>
    <property type="evidence" value="ECO:0007669"/>
    <property type="project" value="UniProtKB-UniRule"/>
</dbReference>
<dbReference type="GO" id="GO:0006412">
    <property type="term" value="P:translation"/>
    <property type="evidence" value="ECO:0007669"/>
    <property type="project" value="InterPro"/>
</dbReference>
<dbReference type="CDD" id="cd07026">
    <property type="entry name" value="Ribosomal_L20"/>
    <property type="match status" value="1"/>
</dbReference>
<dbReference type="FunFam" id="1.10.1900.20:FF:000001">
    <property type="entry name" value="50S ribosomal protein L20"/>
    <property type="match status" value="1"/>
</dbReference>
<dbReference type="Gene3D" id="6.10.160.10">
    <property type="match status" value="1"/>
</dbReference>
<dbReference type="Gene3D" id="1.10.1900.20">
    <property type="entry name" value="Ribosomal protein L20"/>
    <property type="match status" value="1"/>
</dbReference>
<dbReference type="HAMAP" id="MF_00382">
    <property type="entry name" value="Ribosomal_bL20"/>
    <property type="match status" value="1"/>
</dbReference>
<dbReference type="InterPro" id="IPR005813">
    <property type="entry name" value="Ribosomal_bL20"/>
</dbReference>
<dbReference type="InterPro" id="IPR049946">
    <property type="entry name" value="RIBOSOMAL_L20_CS"/>
</dbReference>
<dbReference type="InterPro" id="IPR035566">
    <property type="entry name" value="Ribosomal_protein_bL20_C"/>
</dbReference>
<dbReference type="NCBIfam" id="TIGR01032">
    <property type="entry name" value="rplT_bact"/>
    <property type="match status" value="1"/>
</dbReference>
<dbReference type="PANTHER" id="PTHR10986">
    <property type="entry name" value="39S RIBOSOMAL PROTEIN L20"/>
    <property type="match status" value="1"/>
</dbReference>
<dbReference type="Pfam" id="PF00453">
    <property type="entry name" value="Ribosomal_L20"/>
    <property type="match status" value="1"/>
</dbReference>
<dbReference type="PRINTS" id="PR00062">
    <property type="entry name" value="RIBOSOMALL20"/>
</dbReference>
<dbReference type="SUPFAM" id="SSF74731">
    <property type="entry name" value="Ribosomal protein L20"/>
    <property type="match status" value="1"/>
</dbReference>
<dbReference type="PROSITE" id="PS00937">
    <property type="entry name" value="RIBOSOMAL_L20"/>
    <property type="match status" value="1"/>
</dbReference>